<accession>Q6HLM1</accession>
<name>PHNX_BACHK</name>
<evidence type="ECO:0000255" key="1">
    <source>
        <dbReference type="HAMAP-Rule" id="MF_01375"/>
    </source>
</evidence>
<gene>
    <name evidence="1" type="primary">phnX</name>
    <name type="ordered locus">BT9727_1215</name>
</gene>
<sequence length="264" mass="30042">MKIEAVIFDWAGTTVDYGCFAPLEVFMEIFHKRGVGITAEEARKPMGLLKIDHVRALTEMPRIANEWNRIFGQLPTETDIQEMYEEFEEILFAILPRYASPIHGVKEVIASLRERGIKIGSTTGYTREMMDIVAKEAALQGYKPDFLVTPDDVPAGRPYPWMCYKNAMELGVYPMNHMIKIGDTVSDMKEGRNAGMWTVGVILGSSELGLSEEEVENMDPAELREKIEVVRNRFVENGAHFTIETMQELESVMERIEKQELIIS</sequence>
<protein>
    <recommendedName>
        <fullName evidence="1">Phosphonoacetaldehyde hydrolase</fullName>
        <shortName evidence="1">Phosphonatase</shortName>
        <ecNumber evidence="1">3.11.1.1</ecNumber>
    </recommendedName>
    <alternativeName>
        <fullName evidence="1">Phosphonoacetaldehyde phosphonohydrolase</fullName>
    </alternativeName>
</protein>
<proteinExistence type="inferred from homology"/>
<feature type="chain" id="PRO_0000284580" description="Phosphonoacetaldehyde hydrolase">
    <location>
        <begin position="1"/>
        <end position="264"/>
    </location>
</feature>
<feature type="active site" description="Nucleophile" evidence="1">
    <location>
        <position position="9"/>
    </location>
</feature>
<feature type="active site" description="Schiff-base intermediate with substrate" evidence="1">
    <location>
        <position position="50"/>
    </location>
</feature>
<feature type="binding site" evidence="1">
    <location>
        <position position="9"/>
    </location>
    <ligand>
        <name>Mg(2+)</name>
        <dbReference type="ChEBI" id="CHEBI:18420"/>
    </ligand>
</feature>
<feature type="binding site" evidence="1">
    <location>
        <position position="11"/>
    </location>
    <ligand>
        <name>Mg(2+)</name>
        <dbReference type="ChEBI" id="CHEBI:18420"/>
    </ligand>
</feature>
<feature type="binding site" evidence="1">
    <location>
        <position position="183"/>
    </location>
    <ligand>
        <name>Mg(2+)</name>
        <dbReference type="ChEBI" id="CHEBI:18420"/>
    </ligand>
</feature>
<reference key="1">
    <citation type="journal article" date="2006" name="J. Bacteriol.">
        <title>Pathogenomic sequence analysis of Bacillus cereus and Bacillus thuringiensis isolates closely related to Bacillus anthracis.</title>
        <authorList>
            <person name="Han C.S."/>
            <person name="Xie G."/>
            <person name="Challacombe J.F."/>
            <person name="Altherr M.R."/>
            <person name="Bhotika S.S."/>
            <person name="Bruce D."/>
            <person name="Campbell C.S."/>
            <person name="Campbell M.L."/>
            <person name="Chen J."/>
            <person name="Chertkov O."/>
            <person name="Cleland C."/>
            <person name="Dimitrijevic M."/>
            <person name="Doggett N.A."/>
            <person name="Fawcett J.J."/>
            <person name="Glavina T."/>
            <person name="Goodwin L.A."/>
            <person name="Hill K.K."/>
            <person name="Hitchcock P."/>
            <person name="Jackson P.J."/>
            <person name="Keim P."/>
            <person name="Kewalramani A.R."/>
            <person name="Longmire J."/>
            <person name="Lucas S."/>
            <person name="Malfatti S."/>
            <person name="McMurry K."/>
            <person name="Meincke L.J."/>
            <person name="Misra M."/>
            <person name="Moseman B.L."/>
            <person name="Mundt M."/>
            <person name="Munk A.C."/>
            <person name="Okinaka R.T."/>
            <person name="Parson-Quintana B."/>
            <person name="Reilly L.P."/>
            <person name="Richardson P."/>
            <person name="Robinson D.L."/>
            <person name="Rubin E."/>
            <person name="Saunders E."/>
            <person name="Tapia R."/>
            <person name="Tesmer J.G."/>
            <person name="Thayer N."/>
            <person name="Thompson L.S."/>
            <person name="Tice H."/>
            <person name="Ticknor L.O."/>
            <person name="Wills P.L."/>
            <person name="Brettin T.S."/>
            <person name="Gilna P."/>
        </authorList>
    </citation>
    <scope>NUCLEOTIDE SEQUENCE [LARGE SCALE GENOMIC DNA]</scope>
    <source>
        <strain>97-27</strain>
    </source>
</reference>
<keyword id="KW-0378">Hydrolase</keyword>
<keyword id="KW-0460">Magnesium</keyword>
<keyword id="KW-0479">Metal-binding</keyword>
<keyword id="KW-0704">Schiff base</keyword>
<dbReference type="EC" id="3.11.1.1" evidence="1"/>
<dbReference type="EMBL" id="AE017355">
    <property type="protein sequence ID" value="AAT61975.1"/>
    <property type="molecule type" value="Genomic_DNA"/>
</dbReference>
<dbReference type="RefSeq" id="WP_000687375.1">
    <property type="nucleotide sequence ID" value="NC_005957.1"/>
</dbReference>
<dbReference type="RefSeq" id="YP_035550.1">
    <property type="nucleotide sequence ID" value="NC_005957.1"/>
</dbReference>
<dbReference type="SMR" id="Q6HLM1"/>
<dbReference type="GeneID" id="45021329"/>
<dbReference type="KEGG" id="btk:BT9727_1215"/>
<dbReference type="PATRIC" id="fig|281309.8.peg.1278"/>
<dbReference type="HOGENOM" id="CLU_045011_12_0_9"/>
<dbReference type="Proteomes" id="UP000001301">
    <property type="component" value="Chromosome"/>
</dbReference>
<dbReference type="GO" id="GO:0005829">
    <property type="term" value="C:cytosol"/>
    <property type="evidence" value="ECO:0007669"/>
    <property type="project" value="TreeGrafter"/>
</dbReference>
<dbReference type="GO" id="GO:0000287">
    <property type="term" value="F:magnesium ion binding"/>
    <property type="evidence" value="ECO:0007669"/>
    <property type="project" value="UniProtKB-UniRule"/>
</dbReference>
<dbReference type="GO" id="GO:0008967">
    <property type="term" value="F:phosphoglycolate phosphatase activity"/>
    <property type="evidence" value="ECO:0007669"/>
    <property type="project" value="TreeGrafter"/>
</dbReference>
<dbReference type="GO" id="GO:0050194">
    <property type="term" value="F:phosphonoacetaldehyde hydrolase activity"/>
    <property type="evidence" value="ECO:0007669"/>
    <property type="project" value="UniProtKB-UniRule"/>
</dbReference>
<dbReference type="GO" id="GO:0006281">
    <property type="term" value="P:DNA repair"/>
    <property type="evidence" value="ECO:0007669"/>
    <property type="project" value="TreeGrafter"/>
</dbReference>
<dbReference type="GO" id="GO:0019700">
    <property type="term" value="P:organic phosphonate catabolic process"/>
    <property type="evidence" value="ECO:0007669"/>
    <property type="project" value="InterPro"/>
</dbReference>
<dbReference type="CDD" id="cd02586">
    <property type="entry name" value="HAD_PHN"/>
    <property type="match status" value="1"/>
</dbReference>
<dbReference type="FunFam" id="1.10.150.240:FF:000006">
    <property type="entry name" value="Phosphonoacetaldehyde hydrolase"/>
    <property type="match status" value="1"/>
</dbReference>
<dbReference type="FunFam" id="3.40.50.1000:FF:000072">
    <property type="entry name" value="Phosphonoacetaldehyde hydrolase"/>
    <property type="match status" value="1"/>
</dbReference>
<dbReference type="Gene3D" id="3.40.50.1000">
    <property type="entry name" value="HAD superfamily/HAD-like"/>
    <property type="match status" value="1"/>
</dbReference>
<dbReference type="Gene3D" id="1.10.150.240">
    <property type="entry name" value="Putative phosphatase, domain 2"/>
    <property type="match status" value="1"/>
</dbReference>
<dbReference type="HAMAP" id="MF_01375">
    <property type="entry name" value="PhnX"/>
    <property type="match status" value="1"/>
</dbReference>
<dbReference type="InterPro" id="IPR050155">
    <property type="entry name" value="HAD-like_hydrolase_sf"/>
</dbReference>
<dbReference type="InterPro" id="IPR036412">
    <property type="entry name" value="HAD-like_sf"/>
</dbReference>
<dbReference type="InterPro" id="IPR006439">
    <property type="entry name" value="HAD-SF_hydro_IA"/>
</dbReference>
<dbReference type="InterPro" id="IPR023214">
    <property type="entry name" value="HAD_sf"/>
</dbReference>
<dbReference type="InterPro" id="IPR023198">
    <property type="entry name" value="PGP-like_dom2"/>
</dbReference>
<dbReference type="InterPro" id="IPR006323">
    <property type="entry name" value="Phosphonoacetald_hydro"/>
</dbReference>
<dbReference type="NCBIfam" id="TIGR01549">
    <property type="entry name" value="HAD-SF-IA-v1"/>
    <property type="match status" value="1"/>
</dbReference>
<dbReference type="NCBIfam" id="TIGR01509">
    <property type="entry name" value="HAD-SF-IA-v3"/>
    <property type="match status" value="1"/>
</dbReference>
<dbReference type="NCBIfam" id="TIGR01422">
    <property type="entry name" value="phosphonatase"/>
    <property type="match status" value="1"/>
</dbReference>
<dbReference type="PANTHER" id="PTHR43434">
    <property type="entry name" value="PHOSPHOGLYCOLATE PHOSPHATASE"/>
    <property type="match status" value="1"/>
</dbReference>
<dbReference type="PANTHER" id="PTHR43434:SF19">
    <property type="entry name" value="PHOSPHONOACETALDEHYDE HYDROLASE"/>
    <property type="match status" value="1"/>
</dbReference>
<dbReference type="Pfam" id="PF00702">
    <property type="entry name" value="Hydrolase"/>
    <property type="match status" value="1"/>
</dbReference>
<dbReference type="SFLD" id="SFLDS00003">
    <property type="entry name" value="Haloacid_Dehalogenase"/>
    <property type="match status" value="1"/>
</dbReference>
<dbReference type="SFLD" id="SFLDF00038">
    <property type="entry name" value="phosphonoacetaldehyde_hydrolas"/>
    <property type="match status" value="1"/>
</dbReference>
<dbReference type="SUPFAM" id="SSF56784">
    <property type="entry name" value="HAD-like"/>
    <property type="match status" value="1"/>
</dbReference>
<organism>
    <name type="scientific">Bacillus thuringiensis subsp. konkukian (strain 97-27)</name>
    <dbReference type="NCBI Taxonomy" id="281309"/>
    <lineage>
        <taxon>Bacteria</taxon>
        <taxon>Bacillati</taxon>
        <taxon>Bacillota</taxon>
        <taxon>Bacilli</taxon>
        <taxon>Bacillales</taxon>
        <taxon>Bacillaceae</taxon>
        <taxon>Bacillus</taxon>
        <taxon>Bacillus cereus group</taxon>
    </lineage>
</organism>
<comment type="function">
    <text evidence="1">Involved in phosphonate degradation.</text>
</comment>
<comment type="catalytic activity">
    <reaction evidence="1">
        <text>phosphonoacetaldehyde + H2O = acetaldehyde + phosphate + H(+)</text>
        <dbReference type="Rhea" id="RHEA:18905"/>
        <dbReference type="ChEBI" id="CHEBI:15343"/>
        <dbReference type="ChEBI" id="CHEBI:15377"/>
        <dbReference type="ChEBI" id="CHEBI:15378"/>
        <dbReference type="ChEBI" id="CHEBI:43474"/>
        <dbReference type="ChEBI" id="CHEBI:58383"/>
        <dbReference type="EC" id="3.11.1.1"/>
    </reaction>
</comment>
<comment type="cofactor">
    <cofactor evidence="1">
        <name>Mg(2+)</name>
        <dbReference type="ChEBI" id="CHEBI:18420"/>
    </cofactor>
    <text evidence="1">Binds 1 Mg(2+) ion per subunit.</text>
</comment>
<comment type="subunit">
    <text evidence="1">Homodimer.</text>
</comment>
<comment type="similarity">
    <text evidence="1">Belongs to the HAD-like hydrolase superfamily. PhnX family.</text>
</comment>